<organismHost>
    <name type="scientific">Hordeum vulgare</name>
    <name type="common">Barley</name>
    <dbReference type="NCBI Taxonomy" id="4513"/>
</organismHost>
<organismHost>
    <name type="scientific">Triticum</name>
    <dbReference type="NCBI Taxonomy" id="4564"/>
</organismHost>
<organism>
    <name type="scientific">Soil-borne wheat mosaic virus (strain United States/Nebraska/1981)</name>
    <name type="common">SBWMV</name>
    <dbReference type="NCBI Taxonomy" id="652673"/>
    <lineage>
        <taxon>Viruses</taxon>
        <taxon>Riboviria</taxon>
        <taxon>Orthornavirae</taxon>
        <taxon>Kitrinoviricota</taxon>
        <taxon>Alsuviricetes</taxon>
        <taxon>Martellivirales</taxon>
        <taxon>Virgaviridae</taxon>
        <taxon>Furovirus</taxon>
        <taxon>Soil-borne wheat mosaic virus</taxon>
    </lineage>
</organism>
<dbReference type="EC" id="2.1.1.-"/>
<dbReference type="EC" id="2.7.7.-"/>
<dbReference type="EC" id="2.7.7.48"/>
<dbReference type="EC" id="3.6.4.13"/>
<dbReference type="EMBL" id="L07937">
    <property type="protein sequence ID" value="AAA48492.1"/>
    <property type="molecule type" value="Genomic_RNA"/>
</dbReference>
<dbReference type="EMBL" id="L07937">
    <property type="protein sequence ID" value="AAA48491.1"/>
    <property type="molecule type" value="Genomic_RNA"/>
</dbReference>
<dbReference type="RefSeq" id="NP_049335.1">
    <property type="nucleotide sequence ID" value="NC_002041.1"/>
</dbReference>
<dbReference type="KEGG" id="vg:991047"/>
<dbReference type="KEGG" id="vg:991048"/>
<dbReference type="Proteomes" id="UP000009270">
    <property type="component" value="Genome"/>
</dbReference>
<dbReference type="GO" id="GO:0005524">
    <property type="term" value="F:ATP binding"/>
    <property type="evidence" value="ECO:0007669"/>
    <property type="project" value="UniProtKB-KW"/>
</dbReference>
<dbReference type="GO" id="GO:0016887">
    <property type="term" value="F:ATP hydrolysis activity"/>
    <property type="evidence" value="ECO:0007669"/>
    <property type="project" value="RHEA"/>
</dbReference>
<dbReference type="GO" id="GO:0008174">
    <property type="term" value="F:mRNA methyltransferase activity"/>
    <property type="evidence" value="ECO:0007669"/>
    <property type="project" value="InterPro"/>
</dbReference>
<dbReference type="GO" id="GO:0003723">
    <property type="term" value="F:RNA binding"/>
    <property type="evidence" value="ECO:0007669"/>
    <property type="project" value="UniProtKB-KW"/>
</dbReference>
<dbReference type="GO" id="GO:0003724">
    <property type="term" value="F:RNA helicase activity"/>
    <property type="evidence" value="ECO:0007669"/>
    <property type="project" value="UniProtKB-EC"/>
</dbReference>
<dbReference type="GO" id="GO:0003968">
    <property type="term" value="F:RNA-directed RNA polymerase activity"/>
    <property type="evidence" value="ECO:0007669"/>
    <property type="project" value="UniProtKB-KW"/>
</dbReference>
<dbReference type="GO" id="GO:0006351">
    <property type="term" value="P:DNA-templated transcription"/>
    <property type="evidence" value="ECO:0007669"/>
    <property type="project" value="InterPro"/>
</dbReference>
<dbReference type="GO" id="GO:0032259">
    <property type="term" value="P:methylation"/>
    <property type="evidence" value="ECO:0007669"/>
    <property type="project" value="UniProtKB-KW"/>
</dbReference>
<dbReference type="GO" id="GO:0016556">
    <property type="term" value="P:mRNA modification"/>
    <property type="evidence" value="ECO:0007669"/>
    <property type="project" value="InterPro"/>
</dbReference>
<dbReference type="GO" id="GO:0006396">
    <property type="term" value="P:RNA processing"/>
    <property type="evidence" value="ECO:0007669"/>
    <property type="project" value="InterPro"/>
</dbReference>
<dbReference type="GO" id="GO:0039694">
    <property type="term" value="P:viral RNA genome replication"/>
    <property type="evidence" value="ECO:0007669"/>
    <property type="project" value="InterPro"/>
</dbReference>
<dbReference type="CDD" id="cd23251">
    <property type="entry name" value="Virgaviridae_RdRp"/>
    <property type="match status" value="1"/>
</dbReference>
<dbReference type="Gene3D" id="3.40.50.300">
    <property type="entry name" value="P-loop containing nucleotide triphosphate hydrolases"/>
    <property type="match status" value="2"/>
</dbReference>
<dbReference type="InterPro" id="IPR027351">
    <property type="entry name" value="(+)RNA_virus_helicase_core_dom"/>
</dbReference>
<dbReference type="InterPro" id="IPR002588">
    <property type="entry name" value="Alphavirus-like_MT_dom"/>
</dbReference>
<dbReference type="InterPro" id="IPR043502">
    <property type="entry name" value="DNA/RNA_pol_sf"/>
</dbReference>
<dbReference type="InterPro" id="IPR027417">
    <property type="entry name" value="P-loop_NTPase"/>
</dbReference>
<dbReference type="InterPro" id="IPR001788">
    <property type="entry name" value="RNA-dep_RNA_pol_alsuvir"/>
</dbReference>
<dbReference type="InterPro" id="IPR007094">
    <property type="entry name" value="RNA-dir_pol_PSvirus"/>
</dbReference>
<dbReference type="InterPro" id="IPR047310">
    <property type="entry name" value="Virgaviridae_RdRp"/>
</dbReference>
<dbReference type="InterPro" id="IPR013664">
    <property type="entry name" value="Virgavirus_MeTrfase_C"/>
</dbReference>
<dbReference type="Pfam" id="PF00978">
    <property type="entry name" value="RdRP_2"/>
    <property type="match status" value="1"/>
</dbReference>
<dbReference type="Pfam" id="PF01443">
    <property type="entry name" value="Viral_helicase1"/>
    <property type="match status" value="1"/>
</dbReference>
<dbReference type="Pfam" id="PF01660">
    <property type="entry name" value="Vmethyltransf"/>
    <property type="match status" value="1"/>
</dbReference>
<dbReference type="Pfam" id="PF08456">
    <property type="entry name" value="Vmethyltransf_C"/>
    <property type="match status" value="1"/>
</dbReference>
<dbReference type="SUPFAM" id="SSF56672">
    <property type="entry name" value="DNA/RNA polymerases"/>
    <property type="match status" value="1"/>
</dbReference>
<dbReference type="SUPFAM" id="SSF52540">
    <property type="entry name" value="P-loop containing nucleoside triphosphate hydrolases"/>
    <property type="match status" value="2"/>
</dbReference>
<dbReference type="PROSITE" id="PS51743">
    <property type="entry name" value="ALPHAVIRUS_MT"/>
    <property type="match status" value="1"/>
</dbReference>
<dbReference type="PROSITE" id="PS51657">
    <property type="entry name" value="PSRV_HELICASE"/>
    <property type="match status" value="1"/>
</dbReference>
<dbReference type="PROSITE" id="PS50507">
    <property type="entry name" value="RDRP_SSRNA_POS"/>
    <property type="match status" value="1"/>
</dbReference>
<evidence type="ECO:0000250" key="1"/>
<evidence type="ECO:0000255" key="2"/>
<evidence type="ECO:0000255" key="3">
    <source>
        <dbReference type="PROSITE-ProRule" id="PRU00539"/>
    </source>
</evidence>
<evidence type="ECO:0000255" key="4">
    <source>
        <dbReference type="PROSITE-ProRule" id="PRU01079"/>
    </source>
</evidence>
<evidence type="ECO:0000305" key="5"/>
<keyword id="KW-0067">ATP-binding</keyword>
<keyword id="KW-0175">Coiled coil</keyword>
<keyword id="KW-0347">Helicase</keyword>
<keyword id="KW-0378">Hydrolase</keyword>
<keyword id="KW-0489">Methyltransferase</keyword>
<keyword id="KW-0547">Nucleotide-binding</keyword>
<keyword id="KW-0548">Nucleotidyltransferase</keyword>
<keyword id="KW-1185">Reference proteome</keyword>
<keyword id="KW-0694">RNA-binding</keyword>
<keyword id="KW-0696">RNA-directed RNA polymerase</keyword>
<keyword id="KW-0808">Transferase</keyword>
<keyword id="KW-0693">Viral RNA replication</keyword>
<reference key="1">
    <citation type="journal article" date="1993" name="Virology">
        <title>Complete nucleotide sequence and organization of the bipartite RNA genome of soil-borne wheat mosaic virus.</title>
        <authorList>
            <person name="Shirako Y."/>
            <person name="Wilson T.M."/>
        </authorList>
    </citation>
    <scope>NUCLEOTIDE SEQUENCE [GENOMIC RNA]</scope>
</reference>
<proteinExistence type="inferred from homology"/>
<accession>Q89249</accession>
<accession>Q06359</accession>
<sequence>MPIDSSSILGIISEEDVIRAAISTSATKFGSQLHSTVCDHVKETYLDAVERQKVKKKIDVRRDLSQEQLQLLNDLYPERHIVSSNCERGTHSFAAASRKIETDLLLSRIPKRSWVYDIGGNWATHVKRNDGRKVHCCCPTVDIRDSARKTVRWASIEKYLDEKEEIPPEIGERIKRLQADEDRIYANLKSEKAQPEDLDGKWYCGNRFEDCVFRADRAYAMAIHSIYDIDLSDLANALEEKRIKVMSGTFLFSVDLLLGKKSGTLPTMDGFFEVEDGYVKYGFHNDTNPGYKHNLNQLMKYLTKTFVVAKGGTIYYLELTEQRGDVMFFTMTDATEARMNGVVADESFKCIPIDNKDEVVFPIFEVDQKTDALVFSEILLSRDFVQRAIEYTGRLKPAQLTSDNVNTYLTSTNNTIIIGGSSKKNATKVDATLIQQITTTLIVWTELMNQRQKRVLEKLRMQMKDDVDFMTLAHATFLKMFGKVSYYQRALRCFANWISYVHGADAIQFRNVPLYAEVTDRIKLWKNYAPNQGFVLDLEELDVKIKLHEITEREKRDVSRCIVSGKLGELSSVDNTECGAVLDGKDYKDSRRKTTFEDLLDGEVATNFLDNWCDKTDHFNFSRSDAVSKYAWGMKLLKGVWEFLLPPLHFAPVYVDAEQARIRLNAEIVTVVEHAVTESNVGLTGVEKAEFADAMSFLVGAAKHLEKRKEVAQQAVVEAVEAVRELRKVHSPADVCNAVDLWSAFEKDLDDDDETGTTATIVEKGKAVCDDDVQVVLCGSSSTSSVEEVSKEAELFVETIESQASSVTETSDVTTEVAASSSDESVMSEVPEKSWASVAEDESDDSYYLRSMIISDKVQKSALPKRPDFSKYSTLQQKAKQEALWYLQCKIVSDRTTLRSIIDDHLRGMFHNGNCELPKDSAFLDYTVDNCGTWMYGKPSRPGHSYGVGFSLDTKQRITKCELVKLMWNRDCRGQMNQKPVNTRAFQYLLLSDLSFMMNELVIYRNLQQVVKKKERTKQARITLRDGVPGCGKSTWILNNANPMKDMVLCVGKEATEDLKEKFMKKHKCAESDLKRIRTVDSFLMHDYDKFRAATVHFDEALMAHAGIVYFCADILGAKKVICQGDSQQIPFINRVESITLQYAKLAIDETEYVRLTYRSPVDVAHYLTKKSWYSGGRVTTKNSVLRSMKVVGPRDAKPMTSVHCVPYHRDAQYLTFTQSEKADLYKALRAKGPVEVNTVHETQGKTFDDVIVVRLKTTENEIYPGGRKGQPYEIVATTRHRRSLVYYTAIEDRLFEDISDMQDVMESKLMKNLCSELTKXRFGSKYESILICDREVRVPDVGTPVIIQDFYDRVLPGNSTMDSHFDGYEVSTSDISIELENCTVQPNKNVKVWQDKRGLVPVLRTAMPPKRQNLPVEAMLALKKRNMAAPKLQEAVNEFEVIERTVNRAKEIFFDTSLIDDSEVSTRESNLRWWKRQSTTAKAQLKKETRLLHELDLCYYNYCIKGDEKPKMDRSPQHEYGALQTVVFPDKIVNALFGPAMKEINERIRLALKPHVVYNSRMNAEELNRTVEFLDPEEDFNAFEIDFSKFDKSKTSLHIRAVIELYKLFGLNDLFALLWEKSQCQTKIRDFVNGITAYLLYQQKSGNCDTYGSNTWSAALALLESMPLEKAKFMIFGGDDSLILFPKHLTIEDPCRRLASLWNFDCKLFDFKHNMFCGKFLLKVGDRFKFAPDPMKLITKLGRKDIVDGRLLSEIFVSVGDNYRSYRDYRILEQLTYALRERYRTTEDPTAALVALKKYIFDFKLWASMFNYKGEFVECRVDRNFEW</sequence>
<gene>
    <name type="primary">rep</name>
    <name type="ORF">ORF1-1bis</name>
</gene>
<feature type="chain" id="PRO_0000409449" description="Replicase large subunit">
    <location>
        <begin position="1"/>
        <end position="1828"/>
    </location>
</feature>
<feature type="chain" id="PRO_0000409450" description="Replicase small subunit">
    <location>
        <begin position="1"/>
        <end position="1320"/>
    </location>
</feature>
<feature type="domain" description="Alphavirus-like MT" evidence="4">
    <location>
        <begin position="82"/>
        <end position="302"/>
    </location>
</feature>
<feature type="domain" description="(+)RNA virus helicase ATP-binding">
    <location>
        <begin position="996"/>
        <end position="1154"/>
    </location>
</feature>
<feature type="domain" description="(+)RNA virus helicase C-terminal">
    <location>
        <begin position="1155"/>
        <end position="1320"/>
    </location>
</feature>
<feature type="domain" description="RdRp catalytic" evidence="3">
    <location>
        <begin position="1581"/>
        <end position="1694"/>
    </location>
</feature>
<feature type="region of interest" description="Methyltransferase">
    <location>
        <begin position="61"/>
        <end position="812"/>
    </location>
</feature>
<feature type="region of interest" description="Helicase">
    <location>
        <begin position="1026"/>
        <end position="1289"/>
    </location>
</feature>
<feature type="coiled-coil region" evidence="2">
    <location>
        <begin position="701"/>
        <end position="728"/>
    </location>
</feature>
<feature type="coiled-coil region" evidence="2">
    <location>
        <begin position="1432"/>
        <end position="1496"/>
    </location>
</feature>
<name>RDRP_SBWMN</name>
<comment type="function">
    <molecule>Replicase large subunit</molecule>
    <text evidence="1">Is an RNA-dependent RNA polymerase active in viral RNA replication.</text>
</comment>
<comment type="function">
    <molecule>Replicase small subunit</molecule>
    <text evidence="5">Is a methyltransferase active in RNA capping and an RNA helicase. Methyltransferase displays a cytoplasmic capping enzyme activity. This function is necessary since all viral RNAs are synthesized in the cytoplasm, and host capping enzymes are restricted to the nucleus. Helicase region probably exhibits NTPase and RNA unwinding activities (Potential).</text>
</comment>
<comment type="catalytic activity">
    <reaction evidence="3">
        <text>RNA(n) + a ribonucleoside 5'-triphosphate = RNA(n+1) + diphosphate</text>
        <dbReference type="Rhea" id="RHEA:21248"/>
        <dbReference type="Rhea" id="RHEA-COMP:14527"/>
        <dbReference type="Rhea" id="RHEA-COMP:17342"/>
        <dbReference type="ChEBI" id="CHEBI:33019"/>
        <dbReference type="ChEBI" id="CHEBI:61557"/>
        <dbReference type="ChEBI" id="CHEBI:140395"/>
        <dbReference type="EC" id="2.7.7.48"/>
    </reaction>
</comment>
<comment type="catalytic activity">
    <reaction>
        <text>ATP + H2O = ADP + phosphate + H(+)</text>
        <dbReference type="Rhea" id="RHEA:13065"/>
        <dbReference type="ChEBI" id="CHEBI:15377"/>
        <dbReference type="ChEBI" id="CHEBI:15378"/>
        <dbReference type="ChEBI" id="CHEBI:30616"/>
        <dbReference type="ChEBI" id="CHEBI:43474"/>
        <dbReference type="ChEBI" id="CHEBI:456216"/>
        <dbReference type="EC" id="3.6.4.13"/>
    </reaction>
</comment>
<comment type="subunit">
    <text evidence="1">Heterodimer of a large and a small subunit.</text>
</comment>
<comment type="miscellaneous">
    <text>The replicase large subunit is translated as a fusion protein by episodic readthrough of a termination codon. When readthrough of the terminator codon TGA occurs between the codons for 1320-Lys and 1322-Arg, this results in the addition of the RdRp region.</text>
</comment>
<comment type="similarity">
    <text evidence="5">Belongs to the ssRNA positive-strand viruses RNA-directed RNA polymerase family.</text>
</comment>
<protein>
    <recommendedName>
        <fullName>Replicase large subunit</fullName>
        <ecNumber>2.1.1.-</ecNumber>
        <ecNumber>2.7.7.-</ecNumber>
        <ecNumber>2.7.7.48</ecNumber>
        <ecNumber>3.6.4.13</ecNumber>
    </recommendedName>
    <alternativeName>
        <fullName>209 kDa readthrough protein</fullName>
    </alternativeName>
    <alternativeName>
        <fullName>RNA-directed RNA polymerase</fullName>
    </alternativeName>
    <component>
        <recommendedName>
            <fullName>Replicase small subunit</fullName>
            <ecNumber>2.1.1.-</ecNumber>
            <ecNumber>2.7.7.-</ecNumber>
            <ecNumber>3.6.4.13</ecNumber>
        </recommendedName>
        <alternativeName>
            <fullName>150 kDa protein</fullName>
        </alternativeName>
        <alternativeName>
            <fullName>Methyltransferase/RNA helicase</fullName>
        </alternativeName>
    </component>
</protein>